<proteinExistence type="evidence at protein level"/>
<dbReference type="EC" id="4.2.1.133" evidence="5"/>
<dbReference type="EMBL" id="HM537017">
    <property type="protein sequence ID" value="ADJ93862.1"/>
    <property type="molecule type" value="mRNA"/>
</dbReference>
<dbReference type="SMR" id="E2IHE0"/>
<dbReference type="KEGG" id="ag:ADJ93862"/>
<dbReference type="BRENDA" id="4.2.1.133">
    <property type="organism ID" value="10165"/>
</dbReference>
<dbReference type="UniPathway" id="UPA00213"/>
<dbReference type="GO" id="GO:0009507">
    <property type="term" value="C:chloroplast"/>
    <property type="evidence" value="ECO:0007669"/>
    <property type="project" value="UniProtKB-SubCell"/>
</dbReference>
<dbReference type="GO" id="GO:0102161">
    <property type="term" value="F:copal-8-ol diphosphate synthase activity"/>
    <property type="evidence" value="ECO:0007669"/>
    <property type="project" value="UniProtKB-EC"/>
</dbReference>
<dbReference type="GO" id="GO:0000287">
    <property type="term" value="F:magnesium ion binding"/>
    <property type="evidence" value="ECO:0007669"/>
    <property type="project" value="InterPro"/>
</dbReference>
<dbReference type="GO" id="GO:0010333">
    <property type="term" value="F:terpene synthase activity"/>
    <property type="evidence" value="ECO:0000314"/>
    <property type="project" value="UniProtKB"/>
</dbReference>
<dbReference type="GO" id="GO:0006952">
    <property type="term" value="P:defense response"/>
    <property type="evidence" value="ECO:0000314"/>
    <property type="project" value="UniProtKB"/>
</dbReference>
<dbReference type="GO" id="GO:0033385">
    <property type="term" value="P:geranylgeranyl diphosphate metabolic process"/>
    <property type="evidence" value="ECO:0000314"/>
    <property type="project" value="UniProtKB"/>
</dbReference>
<dbReference type="GO" id="GO:0009686">
    <property type="term" value="P:gibberellin biosynthetic process"/>
    <property type="evidence" value="ECO:0007669"/>
    <property type="project" value="TreeGrafter"/>
</dbReference>
<dbReference type="FunFam" id="1.50.10.160:FF:000001">
    <property type="entry name" value="Ent-copalyl diphosphate synthase"/>
    <property type="match status" value="1"/>
</dbReference>
<dbReference type="FunFam" id="1.50.10.130:FF:000002">
    <property type="entry name" value="Ent-copalyl diphosphate synthase, chloroplastic"/>
    <property type="match status" value="1"/>
</dbReference>
<dbReference type="Gene3D" id="1.50.10.160">
    <property type="match status" value="1"/>
</dbReference>
<dbReference type="Gene3D" id="1.10.600.10">
    <property type="entry name" value="Farnesyl Diphosphate Synthase"/>
    <property type="match status" value="1"/>
</dbReference>
<dbReference type="Gene3D" id="1.50.10.130">
    <property type="entry name" value="Terpene synthase, N-terminal domain"/>
    <property type="match status" value="1"/>
</dbReference>
<dbReference type="InterPro" id="IPR008949">
    <property type="entry name" value="Isoprenoid_synthase_dom_sf"/>
</dbReference>
<dbReference type="InterPro" id="IPR001906">
    <property type="entry name" value="Terpene_synth_N"/>
</dbReference>
<dbReference type="InterPro" id="IPR036965">
    <property type="entry name" value="Terpene_synth_N_sf"/>
</dbReference>
<dbReference type="InterPro" id="IPR050148">
    <property type="entry name" value="Terpene_synthase-like"/>
</dbReference>
<dbReference type="InterPro" id="IPR005630">
    <property type="entry name" value="Terpene_synthase_metal-bd"/>
</dbReference>
<dbReference type="InterPro" id="IPR008930">
    <property type="entry name" value="Terpenoid_cyclase/PrenylTrfase"/>
</dbReference>
<dbReference type="PANTHER" id="PTHR31739">
    <property type="entry name" value="ENT-COPALYL DIPHOSPHATE SYNTHASE, CHLOROPLASTIC"/>
    <property type="match status" value="1"/>
</dbReference>
<dbReference type="PANTHER" id="PTHR31739:SF4">
    <property type="entry name" value="ENT-COPALYL DIPHOSPHATE SYNTHASE, CHLOROPLASTIC"/>
    <property type="match status" value="1"/>
</dbReference>
<dbReference type="Pfam" id="PF01397">
    <property type="entry name" value="Terpene_synth"/>
    <property type="match status" value="1"/>
</dbReference>
<dbReference type="Pfam" id="PF03936">
    <property type="entry name" value="Terpene_synth_C"/>
    <property type="match status" value="1"/>
</dbReference>
<dbReference type="SFLD" id="SFLDG01014">
    <property type="entry name" value="Terpene_Cyclase_Like_1_N-term"/>
    <property type="match status" value="1"/>
</dbReference>
<dbReference type="SFLD" id="SFLDG01605">
    <property type="entry name" value="Terpene_Cyclase_Like_1_N-term"/>
    <property type="match status" value="1"/>
</dbReference>
<dbReference type="SUPFAM" id="SSF48239">
    <property type="entry name" value="Terpenoid cyclases/Protein prenyltransferases"/>
    <property type="match status" value="2"/>
</dbReference>
<dbReference type="SUPFAM" id="SSF48576">
    <property type="entry name" value="Terpenoid synthases"/>
    <property type="match status" value="1"/>
</dbReference>
<protein>
    <recommendedName>
        <fullName evidence="6">Copal-8-ol diphosphate hydratase, chloroplastic</fullName>
        <ecNumber evidence="5">4.2.1.133</ecNumber>
    </recommendedName>
    <alternativeName>
        <fullName evidence="6">Copal-8-ol diphosphate synthase</fullName>
        <shortName evidence="6">CcCLS</shortName>
    </alternativeName>
</protein>
<gene>
    <name evidence="6" type="primary">CLS</name>
</gene>
<keyword id="KW-0150">Chloroplast</keyword>
<keyword id="KW-0175">Coiled coil</keyword>
<keyword id="KW-0456">Lyase</keyword>
<keyword id="KW-0460">Magnesium</keyword>
<keyword id="KW-0479">Metal-binding</keyword>
<keyword id="KW-0611">Plant defense</keyword>
<keyword id="KW-0934">Plastid</keyword>
<keyword id="KW-0809">Transit peptide</keyword>
<organism>
    <name type="scientific">Cistus creticus subsp. creticus</name>
    <name type="common">Rock rose</name>
    <dbReference type="NCBI Taxonomy" id="483148"/>
    <lineage>
        <taxon>Eukaryota</taxon>
        <taxon>Viridiplantae</taxon>
        <taxon>Streptophyta</taxon>
        <taxon>Embryophyta</taxon>
        <taxon>Tracheophyta</taxon>
        <taxon>Spermatophyta</taxon>
        <taxon>Magnoliopsida</taxon>
        <taxon>eudicotyledons</taxon>
        <taxon>Gunneridae</taxon>
        <taxon>Pentapetalae</taxon>
        <taxon>rosids</taxon>
        <taxon>malvids</taxon>
        <taxon>Malvales</taxon>
        <taxon>Cistaceae</taxon>
        <taxon>Cistus</taxon>
    </lineage>
</organism>
<reference key="1">
    <citation type="journal article" date="2010" name="Plant Physiol.">
        <title>A copal-8-ol diphosphate synthase from the angiosperm Cistus creticus subsp. creticus is a putative key enzyme for the formation of pharmacologically active, oxygen-containing labdane-type diterpenes.</title>
        <authorList>
            <person name="Falara V."/>
            <person name="Pichersky E."/>
            <person name="Kanellis A.K."/>
        </authorList>
    </citation>
    <scope>NUCLEOTIDE SEQUENCE [MRNA]</scope>
    <scope>FUNCTION</scope>
    <scope>CATALYTIC ACTIVITY</scope>
    <scope>TISSUE SPECIFICITY</scope>
    <scope>INDUCTION BY WOUNDING</scope>
    <scope>PATHWAY</scope>
</reference>
<reference key="2">
    <citation type="journal article" date="2019" name="Nat. Prod. Rep.">
        <title>Non-volatile natural products in plant glandular trichomes: chemistry, biological activities and biosynthesis.</title>
        <authorList>
            <person name="Liu Y."/>
            <person name="Jing S.-X."/>
            <person name="Luo S.-H."/>
            <person name="Li S.-H."/>
        </authorList>
    </citation>
    <scope>PATHWAY</scope>
    <scope>REVIEW</scope>
</reference>
<accession>E2IHE0</accession>
<feature type="transit peptide" description="Chloroplast" evidence="4">
    <location>
        <begin position="1"/>
        <end position="50"/>
    </location>
</feature>
<feature type="chain" id="PRO_0000419748" description="Copal-8-ol diphosphate hydratase, chloroplastic">
    <location>
        <begin position="51"/>
        <end position="808"/>
    </location>
</feature>
<feature type="coiled-coil region" evidence="4">
    <location>
        <begin position="190"/>
        <end position="219"/>
    </location>
</feature>
<feature type="short sequence motif" description="DXDD motif">
    <location>
        <begin position="391"/>
        <end position="394"/>
    </location>
</feature>
<feature type="binding site" evidence="3">
    <location>
        <position position="256"/>
    </location>
    <ligand>
        <name>substrate</name>
    </ligand>
</feature>
<feature type="binding site" evidence="2">
    <location>
        <position position="391"/>
    </location>
    <ligand>
        <name>Mg(2+)</name>
        <dbReference type="ChEBI" id="CHEBI:18420"/>
    </ligand>
</feature>
<feature type="binding site" evidence="2">
    <location>
        <position position="393"/>
    </location>
    <ligand>
        <name>Mg(2+)</name>
        <dbReference type="ChEBI" id="CHEBI:18420"/>
    </ligand>
</feature>
<feature type="binding site" evidence="3">
    <location>
        <position position="477"/>
    </location>
    <ligand>
        <name>substrate</name>
    </ligand>
</feature>
<evidence type="ECO:0000250" key="1"/>
<evidence type="ECO:0000250" key="2">
    <source>
        <dbReference type="UniProtKB" id="C7BKP9"/>
    </source>
</evidence>
<evidence type="ECO:0000250" key="3">
    <source>
        <dbReference type="UniProtKB" id="Q38802"/>
    </source>
</evidence>
<evidence type="ECO:0000255" key="4"/>
<evidence type="ECO:0000269" key="5">
    <source>
    </source>
</evidence>
<evidence type="ECO:0000303" key="6">
    <source>
    </source>
</evidence>
<evidence type="ECO:0000305" key="7"/>
<comment type="function">
    <text evidence="5">Involved in the biosynthesis of oxygen-containing labdane-type diterpenes that may be implicated in direct and indirect defense mechanisms. No activity with geranyl diphosphate or farnesyl diphosphate as substrate.</text>
</comment>
<comment type="catalytic activity">
    <reaction evidence="5">
        <text>(2E,6E,10E)-geranylgeranyl diphosphate + H2O = 8-hydroxycopalyl diphosphate</text>
        <dbReference type="Rhea" id="RHEA:32703"/>
        <dbReference type="ChEBI" id="CHEBI:15377"/>
        <dbReference type="ChEBI" id="CHEBI:58756"/>
        <dbReference type="ChEBI" id="CHEBI:64283"/>
        <dbReference type="EC" id="4.2.1.133"/>
    </reaction>
</comment>
<comment type="cofactor">
    <cofactor evidence="7">
        <name>Mg(2+)</name>
        <dbReference type="ChEBI" id="CHEBI:18420"/>
    </cofactor>
</comment>
<comment type="pathway">
    <text evidence="5">Secondary metabolite biosynthesis; terpenoid biosynthesis.</text>
</comment>
<comment type="subcellular location">
    <subcellularLocation>
        <location evidence="7">Plastid</location>
        <location evidence="7">Chloroplast</location>
    </subcellularLocation>
</comment>
<comment type="tissue specificity">
    <text evidence="5">Expressed in stems, leaves and trichomes. Not detected in roots and seeds. Higher expression in young leaves than in fully expanded leaves.</text>
</comment>
<comment type="induction">
    <text evidence="5">Up-regulated by wounding.</text>
</comment>
<comment type="domain">
    <text evidence="1">The Asp-Xaa-Asp-Asp (DXDD) motif is important for the catalytic activity, presumably through binding to Mg(2+).</text>
</comment>
<comment type="similarity">
    <text evidence="7">Belongs to the terpene synthase family.</text>
</comment>
<sequence length="808" mass="92655">MAFTFTSAHLFLPVTENHSVHVNYSIPPGNWRLWSTAKGGSNKLDIRRLRCSARRTPEPLAQGSNGGRDGVEAIQRLQTIADDKIDGGANELGIVVWDLIRDGVDAVKSMFDSMGDGDISISAYDTAWVALVKDVNGSGGPQFPSSLQWIVDNQLPDGSWGDSEVFSAYDRLLKTLACVVALKSWNIRPDKCQKGLKFFRDNISKLEKENVEASAQMLSGFEVVFLSLIEVARRLDIQIPLHSPVFEDLIARRNLKFAKIPLDLMHNVPTSLLNSLEGMTGVELDWEKLLKLQSQDGSFITSPSSTAFALMQTNDTKCLGYLKFVVQKFNGGAPGQYPVEIFERIWVVDRLQRLGISRYFQLEIKECCLDYAFKHWTQYGSSWARNTPVYDLDDTCMAFRILRLHGYDVSAEAFRHFEKNGVFFCFGWETTQSVTVNFNLYRATQVAFPGENILKEAKQFSFNFLMKKQAAREFQDKWVILKDFPGELKYALEFPWYASLPRVETRFYVEQYGGDNDVWIGKTLYRMPYINNNVYLELAKLDFNNCQALHRKEWETMQKWFMESKLDEFGVSSKTLLESYFLAAASIFEPERSTERLAWAKTAFLMETIGSYFDDEMNSKDLRKAFVQEFKNIYERRMEAKGTKWNLIIILLTTLNHLTEVCGRDINSYLCHSWEKWMMMWEPEGDRYKGAAELLSNSINLSSGRLFSNDTLSHPNYEKLVTLSNKLCHQLGNSRRGNHNEDSDIKDTKIEIAMQELVQLVHQNSSDDISMDLKQTFFAVVRSFYYAAHCDRGTINSHIVKVLFESVV</sequence>
<name>CLDS_CISCR</name>